<dbReference type="EC" id="2.5.1.61"/>
<dbReference type="EMBL" id="BA000019">
    <property type="protein sequence ID" value="BAB73577.1"/>
    <property type="molecule type" value="Genomic_DNA"/>
</dbReference>
<dbReference type="PIR" id="AH2040">
    <property type="entry name" value="AH2040"/>
</dbReference>
<dbReference type="RefSeq" id="WP_044522887.1">
    <property type="nucleotide sequence ID" value="NZ_RSCN01000017.1"/>
</dbReference>
<dbReference type="SMR" id="Q8YVU6"/>
<dbReference type="STRING" id="103690.gene:10493897"/>
<dbReference type="KEGG" id="ana:alr1878"/>
<dbReference type="eggNOG" id="COG0181">
    <property type="taxonomic scope" value="Bacteria"/>
</dbReference>
<dbReference type="OrthoDB" id="9810298at2"/>
<dbReference type="UniPathway" id="UPA00251">
    <property type="reaction ID" value="UER00319"/>
</dbReference>
<dbReference type="UniPathway" id="UPA00668"/>
<dbReference type="Proteomes" id="UP000002483">
    <property type="component" value="Chromosome"/>
</dbReference>
<dbReference type="GO" id="GO:0005737">
    <property type="term" value="C:cytoplasm"/>
    <property type="evidence" value="ECO:0007669"/>
    <property type="project" value="TreeGrafter"/>
</dbReference>
<dbReference type="GO" id="GO:0004418">
    <property type="term" value="F:hydroxymethylbilane synthase activity"/>
    <property type="evidence" value="ECO:0007669"/>
    <property type="project" value="UniProtKB-UniRule"/>
</dbReference>
<dbReference type="GO" id="GO:0015995">
    <property type="term" value="P:chlorophyll biosynthetic process"/>
    <property type="evidence" value="ECO:0007669"/>
    <property type="project" value="UniProtKB-UniRule"/>
</dbReference>
<dbReference type="GO" id="GO:0006782">
    <property type="term" value="P:protoporphyrinogen IX biosynthetic process"/>
    <property type="evidence" value="ECO:0007669"/>
    <property type="project" value="UniProtKB-UniRule"/>
</dbReference>
<dbReference type="CDD" id="cd13645">
    <property type="entry name" value="PBP2_HuPBGD_like"/>
    <property type="match status" value="1"/>
</dbReference>
<dbReference type="FunFam" id="3.30.160.40:FF:000002">
    <property type="entry name" value="Porphobilinogen deaminase"/>
    <property type="match status" value="1"/>
</dbReference>
<dbReference type="FunFam" id="3.40.190.10:FF:000004">
    <property type="entry name" value="Porphobilinogen deaminase"/>
    <property type="match status" value="1"/>
</dbReference>
<dbReference type="FunFam" id="3.40.190.10:FF:000005">
    <property type="entry name" value="Porphobilinogen deaminase"/>
    <property type="match status" value="1"/>
</dbReference>
<dbReference type="Gene3D" id="3.40.190.10">
    <property type="entry name" value="Periplasmic binding protein-like II"/>
    <property type="match status" value="2"/>
</dbReference>
<dbReference type="Gene3D" id="3.30.160.40">
    <property type="entry name" value="Porphobilinogen deaminase, C-terminal domain"/>
    <property type="match status" value="1"/>
</dbReference>
<dbReference type="HAMAP" id="MF_00260">
    <property type="entry name" value="Porphobil_deam"/>
    <property type="match status" value="1"/>
</dbReference>
<dbReference type="InterPro" id="IPR000860">
    <property type="entry name" value="HemC"/>
</dbReference>
<dbReference type="InterPro" id="IPR022419">
    <property type="entry name" value="Porphobilin_deaminase_cofac_BS"/>
</dbReference>
<dbReference type="InterPro" id="IPR022417">
    <property type="entry name" value="Porphobilin_deaminase_N"/>
</dbReference>
<dbReference type="InterPro" id="IPR022418">
    <property type="entry name" value="Porphobilinogen_deaminase_C"/>
</dbReference>
<dbReference type="InterPro" id="IPR036803">
    <property type="entry name" value="Porphobilinogen_deaminase_C_sf"/>
</dbReference>
<dbReference type="NCBIfam" id="TIGR00212">
    <property type="entry name" value="hemC"/>
    <property type="match status" value="1"/>
</dbReference>
<dbReference type="PANTHER" id="PTHR11557">
    <property type="entry name" value="PORPHOBILINOGEN DEAMINASE"/>
    <property type="match status" value="1"/>
</dbReference>
<dbReference type="PANTHER" id="PTHR11557:SF0">
    <property type="entry name" value="PORPHOBILINOGEN DEAMINASE"/>
    <property type="match status" value="1"/>
</dbReference>
<dbReference type="Pfam" id="PF01379">
    <property type="entry name" value="Porphobil_deam"/>
    <property type="match status" value="1"/>
</dbReference>
<dbReference type="Pfam" id="PF03900">
    <property type="entry name" value="Porphobil_deamC"/>
    <property type="match status" value="1"/>
</dbReference>
<dbReference type="PIRSF" id="PIRSF001438">
    <property type="entry name" value="4pyrrol_synth_OHMeBilane_synth"/>
    <property type="match status" value="1"/>
</dbReference>
<dbReference type="PRINTS" id="PR00151">
    <property type="entry name" value="PORPHBDMNASE"/>
</dbReference>
<dbReference type="SUPFAM" id="SSF53850">
    <property type="entry name" value="Periplasmic binding protein-like II"/>
    <property type="match status" value="1"/>
</dbReference>
<dbReference type="SUPFAM" id="SSF54782">
    <property type="entry name" value="Porphobilinogen deaminase (hydroxymethylbilane synthase), C-terminal domain"/>
    <property type="match status" value="1"/>
</dbReference>
<dbReference type="PROSITE" id="PS00533">
    <property type="entry name" value="PORPHOBILINOGEN_DEAM"/>
    <property type="match status" value="1"/>
</dbReference>
<protein>
    <recommendedName>
        <fullName>Porphobilinogen deaminase</fullName>
        <shortName>PBG</shortName>
        <ecNumber>2.5.1.61</ecNumber>
    </recommendedName>
    <alternativeName>
        <fullName>Hydroxymethylbilane synthase</fullName>
        <shortName>HMBS</shortName>
    </alternativeName>
    <alternativeName>
        <fullName>Pre-uroporphyrinogen synthase</fullName>
    </alternativeName>
</protein>
<comment type="function">
    <text evidence="1">Tetrapolymerization of the monopyrrole PBG into the hydroxymethylbilane pre-uroporphyrinogen in several discrete steps.</text>
</comment>
<comment type="catalytic activity">
    <reaction>
        <text>4 porphobilinogen + H2O = hydroxymethylbilane + 4 NH4(+)</text>
        <dbReference type="Rhea" id="RHEA:13185"/>
        <dbReference type="ChEBI" id="CHEBI:15377"/>
        <dbReference type="ChEBI" id="CHEBI:28938"/>
        <dbReference type="ChEBI" id="CHEBI:57845"/>
        <dbReference type="ChEBI" id="CHEBI:58126"/>
        <dbReference type="EC" id="2.5.1.61"/>
    </reaction>
</comment>
<comment type="cofactor">
    <cofactor evidence="1">
        <name>dipyrromethane</name>
        <dbReference type="ChEBI" id="CHEBI:60342"/>
    </cofactor>
    <text evidence="1">Binds 1 dipyrromethane group covalently.</text>
</comment>
<comment type="pathway">
    <text>Porphyrin-containing compound metabolism; protoporphyrin-IX biosynthesis; coproporphyrinogen-III from 5-aminolevulinate: step 2/4.</text>
</comment>
<comment type="pathway">
    <text>Porphyrin-containing compound metabolism; chlorophyll biosynthesis.</text>
</comment>
<comment type="subunit">
    <text evidence="1">Monomer.</text>
</comment>
<comment type="miscellaneous">
    <text evidence="1">The porphobilinogen subunits are added to the dipyrromethane group.</text>
</comment>
<comment type="similarity">
    <text evidence="2">Belongs to the HMBS family.</text>
</comment>
<gene>
    <name type="primary">hemC</name>
    <name type="ordered locus">alr1878</name>
</gene>
<reference key="1">
    <citation type="journal article" date="2001" name="DNA Res.">
        <title>Complete genomic sequence of the filamentous nitrogen-fixing cyanobacterium Anabaena sp. strain PCC 7120.</title>
        <authorList>
            <person name="Kaneko T."/>
            <person name="Nakamura Y."/>
            <person name="Wolk C.P."/>
            <person name="Kuritz T."/>
            <person name="Sasamoto S."/>
            <person name="Watanabe A."/>
            <person name="Iriguchi M."/>
            <person name="Ishikawa A."/>
            <person name="Kawashima K."/>
            <person name="Kimura T."/>
            <person name="Kishida Y."/>
            <person name="Kohara M."/>
            <person name="Matsumoto M."/>
            <person name="Matsuno A."/>
            <person name="Muraki A."/>
            <person name="Nakazaki N."/>
            <person name="Shimpo S."/>
            <person name="Sugimoto M."/>
            <person name="Takazawa M."/>
            <person name="Yamada M."/>
            <person name="Yasuda M."/>
            <person name="Tabata S."/>
        </authorList>
    </citation>
    <scope>NUCLEOTIDE SEQUENCE [LARGE SCALE GENOMIC DNA]</scope>
    <source>
        <strain>PCC 7120 / SAG 25.82 / UTEX 2576</strain>
    </source>
</reference>
<name>HEM3_NOSS1</name>
<accession>Q8YVU6</accession>
<evidence type="ECO:0000250" key="1"/>
<evidence type="ECO:0000305" key="2"/>
<proteinExistence type="inferred from homology"/>
<feature type="chain" id="PRO_0000142901" description="Porphobilinogen deaminase">
    <location>
        <begin position="1"/>
        <end position="323"/>
    </location>
</feature>
<feature type="modified residue" description="S-(dipyrrolylmethanemethyl)cysteine" evidence="1">
    <location>
        <position position="251"/>
    </location>
</feature>
<sequence length="323" mass="35113">MTSVVSSARRTIRIGSRKSQLALVQTYWVREQLQNSFPDINFEVHTMSTQGDKILDVALAKIGDKGLFTKELEVGMINEEIDFAVHSLKDLPTNLPEGLALAAITERENPADALVVHENFKDKQIDTLPAGAVIGTSSLRRLAQLRNQFPHLTFKDVRGNLNTRLAKLDAGEYDGLILAAAGLQRLGMGDRVHQILPKEISLHAVGQGALGIECRADDAELITVLKAIEHPETRDRCLAERSFLRSLEGGCQVPIGVNTEINGNELILTGVVASVDGQNLVKDTVSGNASDAEAIGIRLAELLREQGAQEILNTIFAEIQRGS</sequence>
<organism>
    <name type="scientific">Nostoc sp. (strain PCC 7120 / SAG 25.82 / UTEX 2576)</name>
    <dbReference type="NCBI Taxonomy" id="103690"/>
    <lineage>
        <taxon>Bacteria</taxon>
        <taxon>Bacillati</taxon>
        <taxon>Cyanobacteriota</taxon>
        <taxon>Cyanophyceae</taxon>
        <taxon>Nostocales</taxon>
        <taxon>Nostocaceae</taxon>
        <taxon>Nostoc</taxon>
    </lineage>
</organism>
<keyword id="KW-0149">Chlorophyll biosynthesis</keyword>
<keyword id="KW-0627">Porphyrin biosynthesis</keyword>
<keyword id="KW-1185">Reference proteome</keyword>
<keyword id="KW-0808">Transferase</keyword>